<organism>
    <name type="scientific">Streptococcus pyogenes serotype M2 (strain MGAS10270)</name>
    <dbReference type="NCBI Taxonomy" id="370552"/>
    <lineage>
        <taxon>Bacteria</taxon>
        <taxon>Bacillati</taxon>
        <taxon>Bacillota</taxon>
        <taxon>Bacilli</taxon>
        <taxon>Lactobacillales</taxon>
        <taxon>Streptococcaceae</taxon>
        <taxon>Streptococcus</taxon>
    </lineage>
</organism>
<accession>Q1JF38</accession>
<sequence>MEVKDILKTVDHTLLATTATWPEIQTILDDAMAYETASACIPASYVKKAAEYVSGKLAICTVIGFPNGYSTTAAKVFECEDAIQNGADEIDMVINLTDVKNGDFDTVEEEIRQIKAKCQDHILKVIVETCQLTKEELIELCGVVTRSGADFIKTSTGFSTAGATFEDVEVMAKYVGEGVKIKAAGGISSLEDAKTFIALGASRLGTSRIIKIVKNEATKTDSY</sequence>
<keyword id="KW-0963">Cytoplasm</keyword>
<keyword id="KW-0456">Lyase</keyword>
<keyword id="KW-0704">Schiff base</keyword>
<gene>
    <name evidence="1" type="primary">deoC</name>
    <name type="ordered locus">MGAS10270_Spy1656</name>
</gene>
<comment type="function">
    <text evidence="1">Catalyzes a reversible aldol reaction between acetaldehyde and D-glyceraldehyde 3-phosphate to generate 2-deoxy-D-ribose 5-phosphate.</text>
</comment>
<comment type="catalytic activity">
    <reaction evidence="1">
        <text>2-deoxy-D-ribose 5-phosphate = D-glyceraldehyde 3-phosphate + acetaldehyde</text>
        <dbReference type="Rhea" id="RHEA:12821"/>
        <dbReference type="ChEBI" id="CHEBI:15343"/>
        <dbReference type="ChEBI" id="CHEBI:59776"/>
        <dbReference type="ChEBI" id="CHEBI:62877"/>
        <dbReference type="EC" id="4.1.2.4"/>
    </reaction>
</comment>
<comment type="pathway">
    <text evidence="1">Carbohydrate degradation; 2-deoxy-D-ribose 1-phosphate degradation; D-glyceraldehyde 3-phosphate and acetaldehyde from 2-deoxy-alpha-D-ribose 1-phosphate: step 2/2.</text>
</comment>
<comment type="subcellular location">
    <subcellularLocation>
        <location evidence="1">Cytoplasm</location>
    </subcellularLocation>
</comment>
<comment type="similarity">
    <text evidence="1">Belongs to the DeoC/FbaB aldolase family. DeoC type 1 subfamily.</text>
</comment>
<reference key="1">
    <citation type="journal article" date="2006" name="Proc. Natl. Acad. Sci. U.S.A.">
        <title>Molecular genetic anatomy of inter- and intraserotype variation in the human bacterial pathogen group A Streptococcus.</title>
        <authorList>
            <person name="Beres S.B."/>
            <person name="Richter E.W."/>
            <person name="Nagiec M.J."/>
            <person name="Sumby P."/>
            <person name="Porcella S.F."/>
            <person name="DeLeo F.R."/>
            <person name="Musser J.M."/>
        </authorList>
    </citation>
    <scope>NUCLEOTIDE SEQUENCE [LARGE SCALE GENOMIC DNA]</scope>
    <source>
        <strain>MGAS10270</strain>
    </source>
</reference>
<protein>
    <recommendedName>
        <fullName evidence="1">Deoxyribose-phosphate aldolase</fullName>
        <shortName evidence="1">DERA</shortName>
        <ecNumber evidence="1">4.1.2.4</ecNumber>
    </recommendedName>
    <alternativeName>
        <fullName evidence="1">2-deoxy-D-ribose 5-phosphate aldolase</fullName>
    </alternativeName>
    <alternativeName>
        <fullName evidence="1">Phosphodeoxyriboaldolase</fullName>
        <shortName evidence="1">Deoxyriboaldolase</shortName>
    </alternativeName>
</protein>
<dbReference type="EC" id="4.1.2.4" evidence="1"/>
<dbReference type="EMBL" id="CP000260">
    <property type="protein sequence ID" value="ABF34721.1"/>
    <property type="molecule type" value="Genomic_DNA"/>
</dbReference>
<dbReference type="SMR" id="Q1JF38"/>
<dbReference type="KEGG" id="sph:MGAS10270_Spy1656"/>
<dbReference type="HOGENOM" id="CLU_053595_0_2_9"/>
<dbReference type="UniPathway" id="UPA00002">
    <property type="reaction ID" value="UER00468"/>
</dbReference>
<dbReference type="Proteomes" id="UP000002436">
    <property type="component" value="Chromosome"/>
</dbReference>
<dbReference type="GO" id="GO:0005737">
    <property type="term" value="C:cytoplasm"/>
    <property type="evidence" value="ECO:0007669"/>
    <property type="project" value="UniProtKB-SubCell"/>
</dbReference>
<dbReference type="GO" id="GO:0004139">
    <property type="term" value="F:deoxyribose-phosphate aldolase activity"/>
    <property type="evidence" value="ECO:0007669"/>
    <property type="project" value="UniProtKB-UniRule"/>
</dbReference>
<dbReference type="GO" id="GO:0006018">
    <property type="term" value="P:2-deoxyribose 1-phosphate catabolic process"/>
    <property type="evidence" value="ECO:0007669"/>
    <property type="project" value="UniProtKB-UniRule"/>
</dbReference>
<dbReference type="GO" id="GO:0016052">
    <property type="term" value="P:carbohydrate catabolic process"/>
    <property type="evidence" value="ECO:0007669"/>
    <property type="project" value="TreeGrafter"/>
</dbReference>
<dbReference type="GO" id="GO:0009264">
    <property type="term" value="P:deoxyribonucleotide catabolic process"/>
    <property type="evidence" value="ECO:0007669"/>
    <property type="project" value="InterPro"/>
</dbReference>
<dbReference type="CDD" id="cd00959">
    <property type="entry name" value="DeoC"/>
    <property type="match status" value="1"/>
</dbReference>
<dbReference type="FunFam" id="3.20.20.70:FF:000044">
    <property type="entry name" value="Deoxyribose-phosphate aldolase"/>
    <property type="match status" value="1"/>
</dbReference>
<dbReference type="Gene3D" id="3.20.20.70">
    <property type="entry name" value="Aldolase class I"/>
    <property type="match status" value="1"/>
</dbReference>
<dbReference type="HAMAP" id="MF_00114">
    <property type="entry name" value="DeoC_type1"/>
    <property type="match status" value="1"/>
</dbReference>
<dbReference type="InterPro" id="IPR013785">
    <property type="entry name" value="Aldolase_TIM"/>
</dbReference>
<dbReference type="InterPro" id="IPR011343">
    <property type="entry name" value="DeoC"/>
</dbReference>
<dbReference type="InterPro" id="IPR002915">
    <property type="entry name" value="DeoC/FbaB/LacD_aldolase"/>
</dbReference>
<dbReference type="InterPro" id="IPR028581">
    <property type="entry name" value="DeoC_typeI"/>
</dbReference>
<dbReference type="NCBIfam" id="TIGR00126">
    <property type="entry name" value="deoC"/>
    <property type="match status" value="1"/>
</dbReference>
<dbReference type="PANTHER" id="PTHR10889">
    <property type="entry name" value="DEOXYRIBOSE-PHOSPHATE ALDOLASE"/>
    <property type="match status" value="1"/>
</dbReference>
<dbReference type="PANTHER" id="PTHR10889:SF1">
    <property type="entry name" value="DEOXYRIBOSE-PHOSPHATE ALDOLASE"/>
    <property type="match status" value="1"/>
</dbReference>
<dbReference type="Pfam" id="PF01791">
    <property type="entry name" value="DeoC"/>
    <property type="match status" value="1"/>
</dbReference>
<dbReference type="PIRSF" id="PIRSF001357">
    <property type="entry name" value="DeoC"/>
    <property type="match status" value="1"/>
</dbReference>
<dbReference type="SMART" id="SM01133">
    <property type="entry name" value="DeoC"/>
    <property type="match status" value="1"/>
</dbReference>
<dbReference type="SUPFAM" id="SSF51569">
    <property type="entry name" value="Aldolase"/>
    <property type="match status" value="1"/>
</dbReference>
<evidence type="ECO:0000255" key="1">
    <source>
        <dbReference type="HAMAP-Rule" id="MF_00114"/>
    </source>
</evidence>
<proteinExistence type="inferred from homology"/>
<feature type="chain" id="PRO_1000015333" description="Deoxyribose-phosphate aldolase">
    <location>
        <begin position="1"/>
        <end position="223"/>
    </location>
</feature>
<feature type="active site" description="Proton donor/acceptor" evidence="1">
    <location>
        <position position="91"/>
    </location>
</feature>
<feature type="active site" description="Schiff-base intermediate with acetaldehyde" evidence="1">
    <location>
        <position position="153"/>
    </location>
</feature>
<feature type="active site" description="Proton donor/acceptor" evidence="1">
    <location>
        <position position="182"/>
    </location>
</feature>
<name>DEOC_STRPD</name>